<sequence length="24" mass="2690">YTATRDNCCILDERFGSYCPTTCG</sequence>
<comment type="function">
    <text evidence="1">Together with fibrinogen alpha (FGA) and fibrinogen beta (FGB), polymerizes to form an insoluble fibrin matrix. Has a major function in hemostasis as one of the primary components of blood clots. In addition, functions during the early stages of wound repair to stabilize the lesion and guide cell migration during re-epithelialization. Was originally thought to be essential for platelet aggregation, based on in vitro studies using anticoagulated blood. However, subsequent studies have shown that it is not absolutely required for thrombus formation in vivo. Enhances expression of SELP in activated platelets via an ITGB3-dependent pathway. Maternal fibrinogen is essential for successful pregnancy. Fibrin deposition is also associated with infection, where it protects against IFNG-mediated hemorrhage. May also facilitate the antibacterial immune response via both innate and T-cell mediated pathways.</text>
</comment>
<comment type="subunit">
    <text evidence="2">Heterohexamer; disulfide linked. Contains 2 sets of 3 non-identical chains (alpha, beta and gamma). The 2 heterotrimers are in head to head conformation with the N-termini in a small central domain (By similarity).</text>
</comment>
<comment type="subcellular location">
    <subcellularLocation>
        <location evidence="3">Secreted</location>
    </subcellularLocation>
</comment>
<comment type="domain">
    <text evidence="2">A long coiled coil structure formed by 3 polypeptide chains connects the central nodule to the C-terminal domains (distal nodules). The long C-terminal ends of the alpha chains fold back, contributing a fourth strand to the coiled coil structure.</text>
</comment>
<comment type="PTM">
    <text>Conversion of fibrinogen to fibrin is triggered by thrombin, which cleaves fibrinopeptides A and B from alpha and beta chains, and thus exposes the N-terminal polymerization sites responsible for the formation of the soft clot. The soft clot is converted into the hard clot by factor XIIIA which catalyzes the epsilon-(gamma-glutamyl)lysine cross-linking between gamma chains (stronger) and between alpha chains (weaker) of different monomers.</text>
</comment>
<name>FIBG_CANLF</name>
<reference key="1">
    <citation type="journal article" date="1975" name="Thromb. Res.">
        <title>Studies of the structure of canine fibrinogen.</title>
        <authorList>
            <person name="Birken S."/>
            <person name="Wilner G.D."/>
            <person name="Canfield R.E."/>
        </authorList>
    </citation>
    <scope>PROTEIN SEQUENCE</scope>
    <scope>SUBCELLULAR LOCATION</scope>
</reference>
<accession>P12800</accession>
<protein>
    <recommendedName>
        <fullName>Fibrinogen gamma chain</fullName>
    </recommendedName>
</protein>
<gene>
    <name type="primary">FGG</name>
</gene>
<organism>
    <name type="scientific">Canis lupus familiaris</name>
    <name type="common">Dog</name>
    <name type="synonym">Canis familiaris</name>
    <dbReference type="NCBI Taxonomy" id="9615"/>
    <lineage>
        <taxon>Eukaryota</taxon>
        <taxon>Metazoa</taxon>
        <taxon>Chordata</taxon>
        <taxon>Craniata</taxon>
        <taxon>Vertebrata</taxon>
        <taxon>Euteleostomi</taxon>
        <taxon>Mammalia</taxon>
        <taxon>Eutheria</taxon>
        <taxon>Laurasiatheria</taxon>
        <taxon>Carnivora</taxon>
        <taxon>Caniformia</taxon>
        <taxon>Canidae</taxon>
        <taxon>Canis</taxon>
    </lineage>
</organism>
<evidence type="ECO:0000250" key="1">
    <source>
        <dbReference type="UniProtKB" id="E9PV24"/>
    </source>
</evidence>
<evidence type="ECO:0000250" key="2">
    <source>
        <dbReference type="UniProtKB" id="P02679"/>
    </source>
</evidence>
<evidence type="ECO:0000269" key="3">
    <source>
    </source>
</evidence>
<keyword id="KW-0094">Blood coagulation</keyword>
<keyword id="KW-0175">Coiled coil</keyword>
<keyword id="KW-0903">Direct protein sequencing</keyword>
<keyword id="KW-1015">Disulfide bond</keyword>
<keyword id="KW-0356">Hemostasis</keyword>
<keyword id="KW-1185">Reference proteome</keyword>
<keyword id="KW-0964">Secreted</keyword>
<dbReference type="PIR" id="A05298">
    <property type="entry name" value="A05298"/>
</dbReference>
<dbReference type="FunCoup" id="P12800">
    <property type="interactions" value="50"/>
</dbReference>
<dbReference type="STRING" id="9615.ENSCAFP00000012417"/>
<dbReference type="PaxDb" id="9612-ENSCAFP00000012417"/>
<dbReference type="eggNOG" id="KOG2579">
    <property type="taxonomic scope" value="Eukaryota"/>
</dbReference>
<dbReference type="InParanoid" id="P12800"/>
<dbReference type="OrthoDB" id="10063010at2759"/>
<dbReference type="Proteomes" id="UP000002254">
    <property type="component" value="Unplaced"/>
</dbReference>
<dbReference type="Proteomes" id="UP000694429">
    <property type="component" value="Unplaced"/>
</dbReference>
<dbReference type="Proteomes" id="UP000694542">
    <property type="component" value="Unplaced"/>
</dbReference>
<dbReference type="Proteomes" id="UP000805418">
    <property type="component" value="Unplaced"/>
</dbReference>
<dbReference type="GO" id="GO:0005577">
    <property type="term" value="C:fibrinogen complex"/>
    <property type="evidence" value="ECO:0007669"/>
    <property type="project" value="InterPro"/>
</dbReference>
<dbReference type="GO" id="GO:0005102">
    <property type="term" value="F:signaling receptor binding"/>
    <property type="evidence" value="ECO:0007669"/>
    <property type="project" value="InterPro"/>
</dbReference>
<dbReference type="GO" id="GO:0030168">
    <property type="term" value="P:platelet activation"/>
    <property type="evidence" value="ECO:0007669"/>
    <property type="project" value="InterPro"/>
</dbReference>
<dbReference type="GO" id="GO:0051258">
    <property type="term" value="P:protein polymerization"/>
    <property type="evidence" value="ECO:0007669"/>
    <property type="project" value="InterPro"/>
</dbReference>
<dbReference type="Gene3D" id="1.20.5.50">
    <property type="match status" value="1"/>
</dbReference>
<dbReference type="InterPro" id="IPR012290">
    <property type="entry name" value="Fibrinogen_a/b/g_coil_dom"/>
</dbReference>
<dbReference type="Pfam" id="PF08702">
    <property type="entry name" value="Fib_alpha"/>
    <property type="match status" value="1"/>
</dbReference>
<dbReference type="SUPFAM" id="SSF58010">
    <property type="entry name" value="Fibrinogen coiled-coil and central regions"/>
    <property type="match status" value="1"/>
</dbReference>
<feature type="chain" id="PRO_0000099062" description="Fibrinogen gamma chain">
    <location>
        <begin position="1"/>
        <end position="24" status="greater than"/>
    </location>
</feature>
<feature type="non-terminal residue">
    <location>
        <position position="24"/>
    </location>
</feature>
<proteinExistence type="evidence at protein level"/>